<dbReference type="EC" id="2.7.7.3" evidence="1"/>
<dbReference type="EMBL" id="CP000377">
    <property type="protein sequence ID" value="ABF63842.1"/>
    <property type="molecule type" value="Genomic_DNA"/>
</dbReference>
<dbReference type="RefSeq" id="WP_011538449.1">
    <property type="nucleotide sequence ID" value="NC_008044.1"/>
</dbReference>
<dbReference type="SMR" id="Q1GHM4"/>
<dbReference type="STRING" id="292414.TM1040_1109"/>
<dbReference type="KEGG" id="sit:TM1040_1109"/>
<dbReference type="eggNOG" id="COG0669">
    <property type="taxonomic scope" value="Bacteria"/>
</dbReference>
<dbReference type="HOGENOM" id="CLU_100149_0_1_5"/>
<dbReference type="OrthoDB" id="9806661at2"/>
<dbReference type="UniPathway" id="UPA00241">
    <property type="reaction ID" value="UER00355"/>
</dbReference>
<dbReference type="Proteomes" id="UP000000636">
    <property type="component" value="Chromosome"/>
</dbReference>
<dbReference type="GO" id="GO:0005737">
    <property type="term" value="C:cytoplasm"/>
    <property type="evidence" value="ECO:0007669"/>
    <property type="project" value="UniProtKB-SubCell"/>
</dbReference>
<dbReference type="GO" id="GO:0005524">
    <property type="term" value="F:ATP binding"/>
    <property type="evidence" value="ECO:0007669"/>
    <property type="project" value="UniProtKB-KW"/>
</dbReference>
<dbReference type="GO" id="GO:0004595">
    <property type="term" value="F:pantetheine-phosphate adenylyltransferase activity"/>
    <property type="evidence" value="ECO:0007669"/>
    <property type="project" value="UniProtKB-UniRule"/>
</dbReference>
<dbReference type="GO" id="GO:0015937">
    <property type="term" value="P:coenzyme A biosynthetic process"/>
    <property type="evidence" value="ECO:0007669"/>
    <property type="project" value="UniProtKB-UniRule"/>
</dbReference>
<dbReference type="CDD" id="cd02163">
    <property type="entry name" value="PPAT"/>
    <property type="match status" value="1"/>
</dbReference>
<dbReference type="Gene3D" id="3.40.50.620">
    <property type="entry name" value="HUPs"/>
    <property type="match status" value="1"/>
</dbReference>
<dbReference type="HAMAP" id="MF_00151">
    <property type="entry name" value="PPAT_bact"/>
    <property type="match status" value="1"/>
</dbReference>
<dbReference type="InterPro" id="IPR004821">
    <property type="entry name" value="Cyt_trans-like"/>
</dbReference>
<dbReference type="InterPro" id="IPR001980">
    <property type="entry name" value="PPAT"/>
</dbReference>
<dbReference type="InterPro" id="IPR014729">
    <property type="entry name" value="Rossmann-like_a/b/a_fold"/>
</dbReference>
<dbReference type="NCBIfam" id="TIGR01510">
    <property type="entry name" value="coaD_prev_kdtB"/>
    <property type="match status" value="1"/>
</dbReference>
<dbReference type="NCBIfam" id="TIGR00125">
    <property type="entry name" value="cyt_tran_rel"/>
    <property type="match status" value="1"/>
</dbReference>
<dbReference type="PANTHER" id="PTHR21342">
    <property type="entry name" value="PHOSPHOPANTETHEINE ADENYLYLTRANSFERASE"/>
    <property type="match status" value="1"/>
</dbReference>
<dbReference type="PANTHER" id="PTHR21342:SF1">
    <property type="entry name" value="PHOSPHOPANTETHEINE ADENYLYLTRANSFERASE"/>
    <property type="match status" value="1"/>
</dbReference>
<dbReference type="Pfam" id="PF01467">
    <property type="entry name" value="CTP_transf_like"/>
    <property type="match status" value="1"/>
</dbReference>
<dbReference type="PRINTS" id="PR01020">
    <property type="entry name" value="LPSBIOSNTHSS"/>
</dbReference>
<dbReference type="SUPFAM" id="SSF52374">
    <property type="entry name" value="Nucleotidylyl transferase"/>
    <property type="match status" value="1"/>
</dbReference>
<comment type="function">
    <text evidence="1">Reversibly transfers an adenylyl group from ATP to 4'-phosphopantetheine, yielding dephospho-CoA (dPCoA) and pyrophosphate.</text>
</comment>
<comment type="catalytic activity">
    <reaction evidence="1">
        <text>(R)-4'-phosphopantetheine + ATP + H(+) = 3'-dephospho-CoA + diphosphate</text>
        <dbReference type="Rhea" id="RHEA:19801"/>
        <dbReference type="ChEBI" id="CHEBI:15378"/>
        <dbReference type="ChEBI" id="CHEBI:30616"/>
        <dbReference type="ChEBI" id="CHEBI:33019"/>
        <dbReference type="ChEBI" id="CHEBI:57328"/>
        <dbReference type="ChEBI" id="CHEBI:61723"/>
        <dbReference type="EC" id="2.7.7.3"/>
    </reaction>
</comment>
<comment type="cofactor">
    <cofactor evidence="1">
        <name>Mg(2+)</name>
        <dbReference type="ChEBI" id="CHEBI:18420"/>
    </cofactor>
</comment>
<comment type="pathway">
    <text evidence="1">Cofactor biosynthesis; coenzyme A biosynthesis; CoA from (R)-pantothenate: step 4/5.</text>
</comment>
<comment type="subunit">
    <text evidence="1">Homohexamer.</text>
</comment>
<comment type="subcellular location">
    <subcellularLocation>
        <location evidence="1">Cytoplasm</location>
    </subcellularLocation>
</comment>
<comment type="similarity">
    <text evidence="1">Belongs to the bacterial CoaD family.</text>
</comment>
<name>COAD_RUEST</name>
<accession>Q1GHM4</accession>
<reference key="1">
    <citation type="submission" date="2006-05" db="EMBL/GenBank/DDBJ databases">
        <title>Complete sequence of chromosome of Silicibacter sp. TM1040.</title>
        <authorList>
            <consortium name="US DOE Joint Genome Institute"/>
            <person name="Copeland A."/>
            <person name="Lucas S."/>
            <person name="Lapidus A."/>
            <person name="Barry K."/>
            <person name="Detter J.C."/>
            <person name="Glavina del Rio T."/>
            <person name="Hammon N."/>
            <person name="Israni S."/>
            <person name="Dalin E."/>
            <person name="Tice H."/>
            <person name="Pitluck S."/>
            <person name="Brettin T."/>
            <person name="Bruce D."/>
            <person name="Han C."/>
            <person name="Tapia R."/>
            <person name="Goodwin L."/>
            <person name="Thompson L.S."/>
            <person name="Gilna P."/>
            <person name="Schmutz J."/>
            <person name="Larimer F."/>
            <person name="Land M."/>
            <person name="Hauser L."/>
            <person name="Kyrpides N."/>
            <person name="Kim E."/>
            <person name="Belas R."/>
            <person name="Moran M.A."/>
            <person name="Buchan A."/>
            <person name="Gonzalez J.M."/>
            <person name="Schell M.A."/>
            <person name="Sun F."/>
            <person name="Richardson P."/>
        </authorList>
    </citation>
    <scope>NUCLEOTIDE SEQUENCE [LARGE SCALE GENOMIC DNA]</scope>
    <source>
        <strain>TM1040</strain>
    </source>
</reference>
<feature type="chain" id="PRO_1000076791" description="Phosphopantetheine adenylyltransferase">
    <location>
        <begin position="1"/>
        <end position="165"/>
    </location>
</feature>
<feature type="binding site" evidence="1">
    <location>
        <begin position="9"/>
        <end position="10"/>
    </location>
    <ligand>
        <name>ATP</name>
        <dbReference type="ChEBI" id="CHEBI:30616"/>
    </ligand>
</feature>
<feature type="binding site" evidence="1">
    <location>
        <position position="9"/>
    </location>
    <ligand>
        <name>substrate</name>
    </ligand>
</feature>
<feature type="binding site" evidence="1">
    <location>
        <position position="17"/>
    </location>
    <ligand>
        <name>ATP</name>
        <dbReference type="ChEBI" id="CHEBI:30616"/>
    </ligand>
</feature>
<feature type="binding site" evidence="1">
    <location>
        <position position="41"/>
    </location>
    <ligand>
        <name>substrate</name>
    </ligand>
</feature>
<feature type="binding site" evidence="1">
    <location>
        <position position="78"/>
    </location>
    <ligand>
        <name>substrate</name>
    </ligand>
</feature>
<feature type="binding site" evidence="1">
    <location>
        <position position="92"/>
    </location>
    <ligand>
        <name>substrate</name>
    </ligand>
</feature>
<feature type="binding site" evidence="1">
    <location>
        <begin position="93"/>
        <end position="95"/>
    </location>
    <ligand>
        <name>ATP</name>
        <dbReference type="ChEBI" id="CHEBI:30616"/>
    </ligand>
</feature>
<feature type="binding site" evidence="1">
    <location>
        <position position="103"/>
    </location>
    <ligand>
        <name>ATP</name>
        <dbReference type="ChEBI" id="CHEBI:30616"/>
    </ligand>
</feature>
<feature type="binding site" evidence="1">
    <location>
        <begin position="128"/>
        <end position="134"/>
    </location>
    <ligand>
        <name>ATP</name>
        <dbReference type="ChEBI" id="CHEBI:30616"/>
    </ligand>
</feature>
<feature type="site" description="Transition state stabilizer" evidence="1">
    <location>
        <position position="17"/>
    </location>
</feature>
<organism>
    <name type="scientific">Ruegeria sp. (strain TM1040)</name>
    <name type="common">Silicibacter sp.</name>
    <dbReference type="NCBI Taxonomy" id="292414"/>
    <lineage>
        <taxon>Bacteria</taxon>
        <taxon>Pseudomonadati</taxon>
        <taxon>Pseudomonadota</taxon>
        <taxon>Alphaproteobacteria</taxon>
        <taxon>Rhodobacterales</taxon>
        <taxon>Roseobacteraceae</taxon>
        <taxon>Ruegeria</taxon>
    </lineage>
</organism>
<evidence type="ECO:0000255" key="1">
    <source>
        <dbReference type="HAMAP-Rule" id="MF_00151"/>
    </source>
</evidence>
<sequence length="165" mass="18445">MRIGLYPGTFDPITLGHIDIIRRATLLVDRLVIGVAINRDKGPLFDLEERVAMIEAECAKLTEQTGTEIVVHPFENLLIDCARDVGAQVIVRGLRAVADFEYEFQMVGMNRALDDSIETVFLMAEARHQAIASKLVKEISRLGGDVSKFVTPLVRERLAERLGQR</sequence>
<keyword id="KW-0067">ATP-binding</keyword>
<keyword id="KW-0173">Coenzyme A biosynthesis</keyword>
<keyword id="KW-0963">Cytoplasm</keyword>
<keyword id="KW-0460">Magnesium</keyword>
<keyword id="KW-0547">Nucleotide-binding</keyword>
<keyword id="KW-0548">Nucleotidyltransferase</keyword>
<keyword id="KW-1185">Reference proteome</keyword>
<keyword id="KW-0808">Transferase</keyword>
<proteinExistence type="inferred from homology"/>
<gene>
    <name evidence="1" type="primary">coaD</name>
    <name type="ordered locus">TM1040_1109</name>
</gene>
<protein>
    <recommendedName>
        <fullName evidence="1">Phosphopantetheine adenylyltransferase</fullName>
        <ecNumber evidence="1">2.7.7.3</ecNumber>
    </recommendedName>
    <alternativeName>
        <fullName evidence="1">Dephospho-CoA pyrophosphorylase</fullName>
    </alternativeName>
    <alternativeName>
        <fullName evidence="1">Pantetheine-phosphate adenylyltransferase</fullName>
        <shortName evidence="1">PPAT</shortName>
    </alternativeName>
</protein>